<protein>
    <recommendedName>
        <fullName>HTH-type transcriptional regulator EcpR</fullName>
    </recommendedName>
</protein>
<feature type="chain" id="PRO_0000369174" description="HTH-type transcriptional regulator EcpR">
    <location>
        <begin position="1"/>
        <end position="196"/>
    </location>
</feature>
<feature type="domain" description="HTH luxR-type" evidence="2">
    <location>
        <begin position="138"/>
        <end position="196"/>
    </location>
</feature>
<feature type="DNA-binding region" description="H-T-H motif" evidence="2">
    <location>
        <begin position="162"/>
        <end position="181"/>
    </location>
</feature>
<organism>
    <name type="scientific">Escherichia coli (strain K12 / DH10B)</name>
    <dbReference type="NCBI Taxonomy" id="316385"/>
    <lineage>
        <taxon>Bacteria</taxon>
        <taxon>Pseudomonadati</taxon>
        <taxon>Pseudomonadota</taxon>
        <taxon>Gammaproteobacteria</taxon>
        <taxon>Enterobacterales</taxon>
        <taxon>Enterobacteriaceae</taxon>
        <taxon>Escherichia</taxon>
    </lineage>
</organism>
<comment type="function">
    <text evidence="1">Part of the ecpRABCDE operon, which encodes the E.coli common pilus (ECP). ECP is found in both commensal and pathogenic strains and plays a dual role in early-stage biofilm development and host cell recognition. Positively regulates the expression of the ecp operon (By similarity).</text>
</comment>
<comment type="subcellular location">
    <subcellularLocation>
        <location evidence="3">Cytoplasm</location>
    </subcellularLocation>
</comment>
<comment type="induction">
    <text evidence="1">Negatively regulated by H-NS. Positively autoregulated. Also positively regulated by IHF (By similarity).</text>
</comment>
<comment type="similarity">
    <text evidence="3">Belongs to the EcpR/MatA family.</text>
</comment>
<name>ECPR_ECODH</name>
<keyword id="KW-0010">Activator</keyword>
<keyword id="KW-0963">Cytoplasm</keyword>
<keyword id="KW-0238">DNA-binding</keyword>
<keyword id="KW-0804">Transcription</keyword>
<keyword id="KW-0805">Transcription regulation</keyword>
<reference key="1">
    <citation type="journal article" date="2008" name="J. Bacteriol.">
        <title>The complete genome sequence of Escherichia coli DH10B: insights into the biology of a laboratory workhorse.</title>
        <authorList>
            <person name="Durfee T."/>
            <person name="Nelson R."/>
            <person name="Baldwin S."/>
            <person name="Plunkett G. III"/>
            <person name="Burland V."/>
            <person name="Mau B."/>
            <person name="Petrosino J.F."/>
            <person name="Qin X."/>
            <person name="Muzny D.M."/>
            <person name="Ayele M."/>
            <person name="Gibbs R.A."/>
            <person name="Csorgo B."/>
            <person name="Posfai G."/>
            <person name="Weinstock G.M."/>
            <person name="Blattner F.R."/>
        </authorList>
    </citation>
    <scope>NUCLEOTIDE SEQUENCE [LARGE SCALE GENOMIC DNA]</scope>
    <source>
        <strain>K12 / DH10B</strain>
    </source>
</reference>
<proteinExistence type="inferred from homology"/>
<sequence length="196" mass="23274">MTWQSDYSRDYEVKNHMECQNRSDKYIWSPHDAYFYKGLSELIVDIDRLIYLSLEKIRKDFVFINLSTDSLSEFINRDNEWLSAVKGKQVVLIAARKSEALANYWYYNSNIRGVVYAGLSRDIRKELVYVINGRFLRKDIKKDKITDREMEIIRMTAQGMQPKSIARIENCSVKTVYTHRRNAEAKLYSKIYKLVQ</sequence>
<dbReference type="EMBL" id="CP000948">
    <property type="protein sequence ID" value="ACB01460.1"/>
    <property type="molecule type" value="Genomic_DNA"/>
</dbReference>
<dbReference type="SMR" id="B1XE36"/>
<dbReference type="KEGG" id="ecd:ECDH10B_0282"/>
<dbReference type="HOGENOM" id="CLU_128111_0_0_6"/>
<dbReference type="GO" id="GO:0005737">
    <property type="term" value="C:cytoplasm"/>
    <property type="evidence" value="ECO:0007669"/>
    <property type="project" value="UniProtKB-SubCell"/>
</dbReference>
<dbReference type="GO" id="GO:0003677">
    <property type="term" value="F:DNA binding"/>
    <property type="evidence" value="ECO:0007669"/>
    <property type="project" value="UniProtKB-KW"/>
</dbReference>
<dbReference type="GO" id="GO:0006355">
    <property type="term" value="P:regulation of DNA-templated transcription"/>
    <property type="evidence" value="ECO:0007669"/>
    <property type="project" value="InterPro"/>
</dbReference>
<dbReference type="CDD" id="cd06170">
    <property type="entry name" value="LuxR_C_like"/>
    <property type="match status" value="1"/>
</dbReference>
<dbReference type="Gene3D" id="1.10.10.10">
    <property type="entry name" value="Winged helix-like DNA-binding domain superfamily/Winged helix DNA-binding domain"/>
    <property type="match status" value="1"/>
</dbReference>
<dbReference type="InterPro" id="IPR016032">
    <property type="entry name" value="Sig_transdc_resp-reg_C-effctor"/>
</dbReference>
<dbReference type="InterPro" id="IPR000792">
    <property type="entry name" value="Tscrpt_reg_LuxR_C"/>
</dbReference>
<dbReference type="InterPro" id="IPR036388">
    <property type="entry name" value="WH-like_DNA-bd_sf"/>
</dbReference>
<dbReference type="Pfam" id="PF00196">
    <property type="entry name" value="GerE"/>
    <property type="match status" value="1"/>
</dbReference>
<dbReference type="PRINTS" id="PR00038">
    <property type="entry name" value="HTHLUXR"/>
</dbReference>
<dbReference type="SMART" id="SM00421">
    <property type="entry name" value="HTH_LUXR"/>
    <property type="match status" value="1"/>
</dbReference>
<dbReference type="SUPFAM" id="SSF46894">
    <property type="entry name" value="C-terminal effector domain of the bipartite response regulators"/>
    <property type="match status" value="1"/>
</dbReference>
<dbReference type="PROSITE" id="PS50043">
    <property type="entry name" value="HTH_LUXR_2"/>
    <property type="match status" value="1"/>
</dbReference>
<accession>B1XE36</accession>
<evidence type="ECO:0000250" key="1"/>
<evidence type="ECO:0000255" key="2">
    <source>
        <dbReference type="PROSITE-ProRule" id="PRU00411"/>
    </source>
</evidence>
<evidence type="ECO:0000305" key="3"/>
<gene>
    <name type="primary">ecpR</name>
    <name type="synonym">matA</name>
    <name type="ordered locus">ECDH10B_0282</name>
</gene>